<name>RS2_RUTMC</name>
<gene>
    <name evidence="1" type="primary">rpsB</name>
    <name type="ordered locus">Rmag_1072</name>
</gene>
<feature type="chain" id="PRO_1000004058" description="Small ribosomal subunit protein uS2">
    <location>
        <begin position="1"/>
        <end position="312"/>
    </location>
</feature>
<protein>
    <recommendedName>
        <fullName evidence="1">Small ribosomal subunit protein uS2</fullName>
    </recommendedName>
    <alternativeName>
        <fullName evidence="2">30S ribosomal protein S2</fullName>
    </alternativeName>
</protein>
<evidence type="ECO:0000255" key="1">
    <source>
        <dbReference type="HAMAP-Rule" id="MF_00291"/>
    </source>
</evidence>
<evidence type="ECO:0000305" key="2"/>
<keyword id="KW-0687">Ribonucleoprotein</keyword>
<keyword id="KW-0689">Ribosomal protein</keyword>
<accession>A1AXW9</accession>
<dbReference type="EMBL" id="CP000488">
    <property type="protein sequence ID" value="ABL02776.1"/>
    <property type="molecule type" value="Genomic_DNA"/>
</dbReference>
<dbReference type="RefSeq" id="WP_011738401.1">
    <property type="nucleotide sequence ID" value="NC_008610.1"/>
</dbReference>
<dbReference type="SMR" id="A1AXW9"/>
<dbReference type="STRING" id="413404.Rmag_1072"/>
<dbReference type="KEGG" id="rma:Rmag_1072"/>
<dbReference type="eggNOG" id="COG0052">
    <property type="taxonomic scope" value="Bacteria"/>
</dbReference>
<dbReference type="HOGENOM" id="CLU_040318_2_0_6"/>
<dbReference type="OrthoDB" id="9808036at2"/>
<dbReference type="Proteomes" id="UP000002587">
    <property type="component" value="Chromosome"/>
</dbReference>
<dbReference type="GO" id="GO:0022627">
    <property type="term" value="C:cytosolic small ribosomal subunit"/>
    <property type="evidence" value="ECO:0007669"/>
    <property type="project" value="TreeGrafter"/>
</dbReference>
<dbReference type="GO" id="GO:0003735">
    <property type="term" value="F:structural constituent of ribosome"/>
    <property type="evidence" value="ECO:0007669"/>
    <property type="project" value="InterPro"/>
</dbReference>
<dbReference type="GO" id="GO:0006412">
    <property type="term" value="P:translation"/>
    <property type="evidence" value="ECO:0007669"/>
    <property type="project" value="UniProtKB-UniRule"/>
</dbReference>
<dbReference type="CDD" id="cd01425">
    <property type="entry name" value="RPS2"/>
    <property type="match status" value="1"/>
</dbReference>
<dbReference type="FunFam" id="1.10.287.610:FF:000001">
    <property type="entry name" value="30S ribosomal protein S2"/>
    <property type="match status" value="1"/>
</dbReference>
<dbReference type="Gene3D" id="3.40.50.10490">
    <property type="entry name" value="Glucose-6-phosphate isomerase like protein, domain 1"/>
    <property type="match status" value="1"/>
</dbReference>
<dbReference type="Gene3D" id="1.10.287.610">
    <property type="entry name" value="Helix hairpin bin"/>
    <property type="match status" value="1"/>
</dbReference>
<dbReference type="HAMAP" id="MF_00291_B">
    <property type="entry name" value="Ribosomal_uS2_B"/>
    <property type="match status" value="1"/>
</dbReference>
<dbReference type="InterPro" id="IPR001865">
    <property type="entry name" value="Ribosomal_uS2"/>
</dbReference>
<dbReference type="InterPro" id="IPR005706">
    <property type="entry name" value="Ribosomal_uS2_bac/mit/plastid"/>
</dbReference>
<dbReference type="InterPro" id="IPR018130">
    <property type="entry name" value="Ribosomal_uS2_CS"/>
</dbReference>
<dbReference type="InterPro" id="IPR023591">
    <property type="entry name" value="Ribosomal_uS2_flav_dom_sf"/>
</dbReference>
<dbReference type="NCBIfam" id="TIGR01011">
    <property type="entry name" value="rpsB_bact"/>
    <property type="match status" value="1"/>
</dbReference>
<dbReference type="PANTHER" id="PTHR12534">
    <property type="entry name" value="30S RIBOSOMAL PROTEIN S2 PROKARYOTIC AND ORGANELLAR"/>
    <property type="match status" value="1"/>
</dbReference>
<dbReference type="PANTHER" id="PTHR12534:SF0">
    <property type="entry name" value="SMALL RIBOSOMAL SUBUNIT PROTEIN US2M"/>
    <property type="match status" value="1"/>
</dbReference>
<dbReference type="Pfam" id="PF00318">
    <property type="entry name" value="Ribosomal_S2"/>
    <property type="match status" value="1"/>
</dbReference>
<dbReference type="PRINTS" id="PR00395">
    <property type="entry name" value="RIBOSOMALS2"/>
</dbReference>
<dbReference type="SUPFAM" id="SSF52313">
    <property type="entry name" value="Ribosomal protein S2"/>
    <property type="match status" value="1"/>
</dbReference>
<dbReference type="PROSITE" id="PS00962">
    <property type="entry name" value="RIBOSOMAL_S2_1"/>
    <property type="match status" value="1"/>
</dbReference>
<dbReference type="PROSITE" id="PS00963">
    <property type="entry name" value="RIBOSOMAL_S2_2"/>
    <property type="match status" value="1"/>
</dbReference>
<sequence length="312" mass="34795">MAKTSMKKMLEAGVHFGHRSRFWSPKMGRFIYGTRNGVHIINLEKTLPLFNDALNFASKITAVGRSILFVGTKRAASNIIKQEAMRCGMPYVNHRWLGGMMTNYKTIKVSIKRLKDLEFLAEENFNQFGKKEALMMTREMEKLERSLGGIKDLNDIPDVIFVIDIGVEKNAVAEAKKLHLPIIGIVDTNHSPEGIDYVIPGNDDSIRAIGYYAREIANAILEAKAATSTSIEKKVSVKKLETKKPGSKKTPIEQVPAKEEIIKTSIKEDKPETLNKIALNTMKKADLIAYAETQGVTINSTDTKAQTIEKLA</sequence>
<reference key="1">
    <citation type="journal article" date="2007" name="Science">
        <title>The Calyptogena magnifica chemoautotrophic symbiont genome.</title>
        <authorList>
            <person name="Newton I.L.G."/>
            <person name="Woyke T."/>
            <person name="Auchtung T.A."/>
            <person name="Dilly G.F."/>
            <person name="Dutton R.J."/>
            <person name="Fisher M.C."/>
            <person name="Fontanez K.M."/>
            <person name="Lau E."/>
            <person name="Stewart F.J."/>
            <person name="Richardson P.M."/>
            <person name="Barry K.W."/>
            <person name="Saunders E."/>
            <person name="Detter J.C."/>
            <person name="Wu D."/>
            <person name="Eisen J.A."/>
            <person name="Cavanaugh C.M."/>
        </authorList>
    </citation>
    <scope>NUCLEOTIDE SEQUENCE [LARGE SCALE GENOMIC DNA]</scope>
</reference>
<proteinExistence type="inferred from homology"/>
<organism>
    <name type="scientific">Ruthia magnifica subsp. Calyptogena magnifica</name>
    <dbReference type="NCBI Taxonomy" id="413404"/>
    <lineage>
        <taxon>Bacteria</taxon>
        <taxon>Pseudomonadati</taxon>
        <taxon>Pseudomonadota</taxon>
        <taxon>Gammaproteobacteria</taxon>
        <taxon>Candidatus Pseudothioglobaceae</taxon>
        <taxon>Candidatus Ruthturnera</taxon>
    </lineage>
</organism>
<comment type="similarity">
    <text evidence="1">Belongs to the universal ribosomal protein uS2 family.</text>
</comment>